<organism>
    <name type="scientific">Shigella flexneri serotype 5b (strain 8401)</name>
    <dbReference type="NCBI Taxonomy" id="373384"/>
    <lineage>
        <taxon>Bacteria</taxon>
        <taxon>Pseudomonadati</taxon>
        <taxon>Pseudomonadota</taxon>
        <taxon>Gammaproteobacteria</taxon>
        <taxon>Enterobacterales</taxon>
        <taxon>Enterobacteriaceae</taxon>
        <taxon>Shigella</taxon>
    </lineage>
</organism>
<gene>
    <name evidence="1" type="primary">cutC</name>
    <name type="ordered locus">SFV_1912</name>
</gene>
<name>CUTC_SHIF8</name>
<feature type="chain" id="PRO_1000046942" description="PF03932 family protein CutC">
    <location>
        <begin position="1"/>
        <end position="248"/>
    </location>
</feature>
<protein>
    <recommendedName>
        <fullName evidence="1">PF03932 family protein CutC</fullName>
    </recommendedName>
</protein>
<keyword id="KW-0963">Cytoplasm</keyword>
<dbReference type="EMBL" id="CP000266">
    <property type="protein sequence ID" value="ABF04062.1"/>
    <property type="molecule type" value="Genomic_DNA"/>
</dbReference>
<dbReference type="RefSeq" id="WP_001185741.1">
    <property type="nucleotide sequence ID" value="NC_008258.1"/>
</dbReference>
<dbReference type="SMR" id="Q0T3Q3"/>
<dbReference type="GeneID" id="93776175"/>
<dbReference type="KEGG" id="sfv:SFV_1912"/>
<dbReference type="HOGENOM" id="CLU_050555_3_1_6"/>
<dbReference type="Proteomes" id="UP000000659">
    <property type="component" value="Chromosome"/>
</dbReference>
<dbReference type="GO" id="GO:0005737">
    <property type="term" value="C:cytoplasm"/>
    <property type="evidence" value="ECO:0007669"/>
    <property type="project" value="UniProtKB-SubCell"/>
</dbReference>
<dbReference type="GO" id="GO:0005507">
    <property type="term" value="F:copper ion binding"/>
    <property type="evidence" value="ECO:0007669"/>
    <property type="project" value="TreeGrafter"/>
</dbReference>
<dbReference type="FunFam" id="3.20.20.380:FF:000001">
    <property type="entry name" value="Copper homeostasis protein CutC"/>
    <property type="match status" value="1"/>
</dbReference>
<dbReference type="Gene3D" id="3.20.20.380">
    <property type="entry name" value="Copper homeostasis (CutC) domain"/>
    <property type="match status" value="1"/>
</dbReference>
<dbReference type="HAMAP" id="MF_00795">
    <property type="entry name" value="CutC"/>
    <property type="match status" value="1"/>
</dbReference>
<dbReference type="InterPro" id="IPR005627">
    <property type="entry name" value="CutC-like"/>
</dbReference>
<dbReference type="InterPro" id="IPR036822">
    <property type="entry name" value="CutC-like_dom_sf"/>
</dbReference>
<dbReference type="NCBIfam" id="NF008603">
    <property type="entry name" value="PRK11572.1"/>
    <property type="match status" value="1"/>
</dbReference>
<dbReference type="PANTHER" id="PTHR12598">
    <property type="entry name" value="COPPER HOMEOSTASIS PROTEIN CUTC"/>
    <property type="match status" value="1"/>
</dbReference>
<dbReference type="PANTHER" id="PTHR12598:SF0">
    <property type="entry name" value="COPPER HOMEOSTASIS PROTEIN CUTC HOMOLOG"/>
    <property type="match status" value="1"/>
</dbReference>
<dbReference type="Pfam" id="PF03932">
    <property type="entry name" value="CutC"/>
    <property type="match status" value="1"/>
</dbReference>
<dbReference type="SUPFAM" id="SSF110395">
    <property type="entry name" value="CutC-like"/>
    <property type="match status" value="1"/>
</dbReference>
<comment type="subunit">
    <text evidence="1">Homodimer.</text>
</comment>
<comment type="subcellular location">
    <subcellularLocation>
        <location evidence="1">Cytoplasm</location>
    </subcellularLocation>
</comment>
<comment type="similarity">
    <text evidence="1">Belongs to the CutC family.</text>
</comment>
<comment type="caution">
    <text evidence="1">Once thought to be involved in copper homeostasis, experiments in E.coli have shown this is not the case.</text>
</comment>
<evidence type="ECO:0000255" key="1">
    <source>
        <dbReference type="HAMAP-Rule" id="MF_00795"/>
    </source>
</evidence>
<sequence>MALLEICCYSMECALTAQQNGADRVELCAAPKEGGLTPSLGVLKSVRQRVTIPVHPIIRPRGGDFCYSDGEFAAILEDVRTVRELGFPGLVTGVLDVDGNVDMPRMEKIMAAAGPLAVTFHRAFDMCANPLYTLNNLAELGIARVLTSGQKSDALQGLSKIMELIAHRDAPIIMAGAGVRAENLHHFLDAGVLEVHSSAGAWQASPMRYRNQGLSMSSDEHADEYSRYIVDGAAVAEMKGIIERHQAK</sequence>
<accession>Q0T3Q3</accession>
<reference key="1">
    <citation type="journal article" date="2006" name="BMC Genomics">
        <title>Complete genome sequence of Shigella flexneri 5b and comparison with Shigella flexneri 2a.</title>
        <authorList>
            <person name="Nie H."/>
            <person name="Yang F."/>
            <person name="Zhang X."/>
            <person name="Yang J."/>
            <person name="Chen L."/>
            <person name="Wang J."/>
            <person name="Xiong Z."/>
            <person name="Peng J."/>
            <person name="Sun L."/>
            <person name="Dong J."/>
            <person name="Xue Y."/>
            <person name="Xu X."/>
            <person name="Chen S."/>
            <person name="Yao Z."/>
            <person name="Shen Y."/>
            <person name="Jin Q."/>
        </authorList>
    </citation>
    <scope>NUCLEOTIDE SEQUENCE [LARGE SCALE GENOMIC DNA]</scope>
    <source>
        <strain>8401</strain>
    </source>
</reference>
<proteinExistence type="inferred from homology"/>